<accession>Q97I57</accession>
<feature type="chain" id="PRO_0000088438" description="Putative zinc metalloprotease CA_C1796">
    <location>
        <begin position="1"/>
        <end position="339"/>
    </location>
</feature>
<feature type="transmembrane region" description="Helical" evidence="1">
    <location>
        <begin position="91"/>
        <end position="113"/>
    </location>
</feature>
<feature type="transmembrane region" description="Helical" evidence="1">
    <location>
        <begin position="275"/>
        <end position="297"/>
    </location>
</feature>
<feature type="transmembrane region" description="Helical" evidence="1">
    <location>
        <begin position="310"/>
        <end position="330"/>
    </location>
</feature>
<feature type="domain" description="PDZ">
    <location>
        <begin position="99"/>
        <end position="177"/>
    </location>
</feature>
<feature type="active site" evidence="2">
    <location>
        <position position="21"/>
    </location>
</feature>
<feature type="binding site" evidence="2">
    <location>
        <position position="20"/>
    </location>
    <ligand>
        <name>Zn(2+)</name>
        <dbReference type="ChEBI" id="CHEBI:29105"/>
        <note>catalytic</note>
    </ligand>
</feature>
<feature type="binding site" evidence="2">
    <location>
        <position position="24"/>
    </location>
    <ligand>
        <name>Zn(2+)</name>
        <dbReference type="ChEBI" id="CHEBI:29105"/>
        <note>catalytic</note>
    </ligand>
</feature>
<dbReference type="EC" id="3.4.24.-"/>
<dbReference type="EMBL" id="AE001437">
    <property type="protein sequence ID" value="AAK79761.1"/>
    <property type="molecule type" value="Genomic_DNA"/>
</dbReference>
<dbReference type="PIR" id="F97121">
    <property type="entry name" value="F97121"/>
</dbReference>
<dbReference type="RefSeq" id="NP_348421.1">
    <property type="nucleotide sequence ID" value="NC_003030.1"/>
</dbReference>
<dbReference type="SMR" id="Q97I57"/>
<dbReference type="STRING" id="272562.CA_C1796"/>
<dbReference type="KEGG" id="cac:CA_C1796"/>
<dbReference type="PATRIC" id="fig|272562.8.peg.2002"/>
<dbReference type="eggNOG" id="COG0750">
    <property type="taxonomic scope" value="Bacteria"/>
</dbReference>
<dbReference type="HOGENOM" id="CLU_025778_1_3_9"/>
<dbReference type="OrthoDB" id="9782003at2"/>
<dbReference type="Proteomes" id="UP000000814">
    <property type="component" value="Chromosome"/>
</dbReference>
<dbReference type="GO" id="GO:0005886">
    <property type="term" value="C:plasma membrane"/>
    <property type="evidence" value="ECO:0007669"/>
    <property type="project" value="UniProtKB-SubCell"/>
</dbReference>
<dbReference type="GO" id="GO:0046872">
    <property type="term" value="F:metal ion binding"/>
    <property type="evidence" value="ECO:0007669"/>
    <property type="project" value="UniProtKB-KW"/>
</dbReference>
<dbReference type="GO" id="GO:0004222">
    <property type="term" value="F:metalloendopeptidase activity"/>
    <property type="evidence" value="ECO:0007669"/>
    <property type="project" value="InterPro"/>
</dbReference>
<dbReference type="GO" id="GO:0006508">
    <property type="term" value="P:proteolysis"/>
    <property type="evidence" value="ECO:0007669"/>
    <property type="project" value="UniProtKB-KW"/>
</dbReference>
<dbReference type="CDD" id="cd23081">
    <property type="entry name" value="cpPDZ_EcRseP-like"/>
    <property type="match status" value="1"/>
</dbReference>
<dbReference type="CDD" id="cd06163">
    <property type="entry name" value="S2P-M50_PDZ_RseP-like"/>
    <property type="match status" value="1"/>
</dbReference>
<dbReference type="Gene3D" id="2.30.42.10">
    <property type="match status" value="1"/>
</dbReference>
<dbReference type="InterPro" id="IPR041489">
    <property type="entry name" value="PDZ_6"/>
</dbReference>
<dbReference type="InterPro" id="IPR036034">
    <property type="entry name" value="PDZ_sf"/>
</dbReference>
<dbReference type="InterPro" id="IPR004387">
    <property type="entry name" value="Pept_M50_Zn"/>
</dbReference>
<dbReference type="InterPro" id="IPR008915">
    <property type="entry name" value="Peptidase_M50"/>
</dbReference>
<dbReference type="NCBIfam" id="TIGR00054">
    <property type="entry name" value="RIP metalloprotease RseP"/>
    <property type="match status" value="1"/>
</dbReference>
<dbReference type="PANTHER" id="PTHR42837:SF2">
    <property type="entry name" value="MEMBRANE METALLOPROTEASE ARASP2, CHLOROPLASTIC-RELATED"/>
    <property type="match status" value="1"/>
</dbReference>
<dbReference type="PANTHER" id="PTHR42837">
    <property type="entry name" value="REGULATOR OF SIGMA-E PROTEASE RSEP"/>
    <property type="match status" value="1"/>
</dbReference>
<dbReference type="Pfam" id="PF17820">
    <property type="entry name" value="PDZ_6"/>
    <property type="match status" value="1"/>
</dbReference>
<dbReference type="Pfam" id="PF02163">
    <property type="entry name" value="Peptidase_M50"/>
    <property type="match status" value="1"/>
</dbReference>
<dbReference type="SUPFAM" id="SSF50156">
    <property type="entry name" value="PDZ domain-like"/>
    <property type="match status" value="1"/>
</dbReference>
<dbReference type="PROSITE" id="PS00142">
    <property type="entry name" value="ZINC_PROTEASE"/>
    <property type="match status" value="1"/>
</dbReference>
<proteinExistence type="inferred from homology"/>
<reference key="1">
    <citation type="journal article" date="2001" name="J. Bacteriol.">
        <title>Genome sequence and comparative analysis of the solvent-producing bacterium Clostridium acetobutylicum.</title>
        <authorList>
            <person name="Noelling J."/>
            <person name="Breton G."/>
            <person name="Omelchenko M.V."/>
            <person name="Makarova K.S."/>
            <person name="Zeng Q."/>
            <person name="Gibson R."/>
            <person name="Lee H.M."/>
            <person name="Dubois J."/>
            <person name="Qiu D."/>
            <person name="Hitti J."/>
            <person name="Wolf Y.I."/>
            <person name="Tatusov R.L."/>
            <person name="Sabathe F."/>
            <person name="Doucette-Stamm L.A."/>
            <person name="Soucaille P."/>
            <person name="Daly M.J."/>
            <person name="Bennett G.N."/>
            <person name="Koonin E.V."/>
            <person name="Smith D.R."/>
        </authorList>
    </citation>
    <scope>NUCLEOTIDE SEQUENCE [LARGE SCALE GENOMIC DNA]</scope>
    <source>
        <strain>ATCC 824 / DSM 792 / JCM 1419 / IAM 19013 / LMG 5710 / NBRC 13948 / NRRL B-527 / VKM B-1787 / 2291 / W</strain>
    </source>
</reference>
<evidence type="ECO:0000255" key="1"/>
<evidence type="ECO:0000255" key="2">
    <source>
        <dbReference type="PROSITE-ProRule" id="PRU10095"/>
    </source>
</evidence>
<evidence type="ECO:0000305" key="3"/>
<comment type="cofactor">
    <cofactor evidence="3">
        <name>Zn(2+)</name>
        <dbReference type="ChEBI" id="CHEBI:29105"/>
    </cofactor>
</comment>
<comment type="subcellular location">
    <subcellularLocation>
        <location evidence="3">Cell membrane</location>
        <topology evidence="3">Multi-pass membrane protein</topology>
    </subcellularLocation>
</comment>
<comment type="similarity">
    <text evidence="3">Belongs to the peptidase M50B family.</text>
</comment>
<name>Y1796_CLOAB</name>
<protein>
    <recommendedName>
        <fullName>Putative zinc metalloprotease CA_C1796</fullName>
        <ecNumber>3.4.24.-</ecNumber>
    </recommendedName>
</protein>
<sequence>MSFFNIVIAILAFGVLILIHELGHFVLAKLNDVKVEEFAIGMGPKLLGIKGKETQYSIRALPIGGYVKMLGDESKSDDPRAFNNKSSARRLSIVIAGPIMNLILAAVLFCIVGMSEGIALPTVGKISANSPAQKIGIKAGDTIVKINNYSVHTWEDISFNMALNKGEGIKLALKNNGTIKKVTLVPQYSKKEKMYLIGISPKFIDKPTIIEGAKYGTSETVTMIKTVYLSLKMMVTGKASAKDVSGPVSIIKVTGAAANAGFIRLVNFIAFISAQLGVMNLLPIPALDGGFVFLFLFQMITGKKVDDDKVGFVNTIGFALLMILMIVVTIKDVVYPINF</sequence>
<organism>
    <name type="scientific">Clostridium acetobutylicum (strain ATCC 824 / DSM 792 / JCM 1419 / IAM 19013 / LMG 5710 / NBRC 13948 / NRRL B-527 / VKM B-1787 / 2291 / W)</name>
    <dbReference type="NCBI Taxonomy" id="272562"/>
    <lineage>
        <taxon>Bacteria</taxon>
        <taxon>Bacillati</taxon>
        <taxon>Bacillota</taxon>
        <taxon>Clostridia</taxon>
        <taxon>Eubacteriales</taxon>
        <taxon>Clostridiaceae</taxon>
        <taxon>Clostridium</taxon>
    </lineage>
</organism>
<gene>
    <name type="ordered locus">CA_C1796</name>
</gene>
<keyword id="KW-1003">Cell membrane</keyword>
<keyword id="KW-0378">Hydrolase</keyword>
<keyword id="KW-0472">Membrane</keyword>
<keyword id="KW-0479">Metal-binding</keyword>
<keyword id="KW-0482">Metalloprotease</keyword>
<keyword id="KW-0645">Protease</keyword>
<keyword id="KW-1185">Reference proteome</keyword>
<keyword id="KW-0812">Transmembrane</keyword>
<keyword id="KW-1133">Transmembrane helix</keyword>
<keyword id="KW-0862">Zinc</keyword>